<gene>
    <name evidence="1" type="primary">rnfH</name>
    <name type="ordered locus">PLES_51511</name>
</gene>
<name>RNFH_PSEA8</name>
<feature type="chain" id="PRO_1000200189" description="Protein RnfH">
    <location>
        <begin position="1"/>
        <end position="101"/>
    </location>
</feature>
<proteinExistence type="inferred from homology"/>
<sequence>MAEIAVEVVYALPERQALLRLSVPAGTSAREAVLLSGIAEAFPGLDVQGCPLGIFGKLLARPEERVLEAGERVEIYRPLIADPKEVRKQRAARARSEREGG</sequence>
<reference key="1">
    <citation type="journal article" date="2009" name="Genome Res.">
        <title>Newly introduced genomic prophage islands are critical determinants of in vivo competitiveness in the Liverpool epidemic strain of Pseudomonas aeruginosa.</title>
        <authorList>
            <person name="Winstanley C."/>
            <person name="Langille M.G.I."/>
            <person name="Fothergill J.L."/>
            <person name="Kukavica-Ibrulj I."/>
            <person name="Paradis-Bleau C."/>
            <person name="Sanschagrin F."/>
            <person name="Thomson N.R."/>
            <person name="Winsor G.L."/>
            <person name="Quail M.A."/>
            <person name="Lennard N."/>
            <person name="Bignell A."/>
            <person name="Clarke L."/>
            <person name="Seeger K."/>
            <person name="Saunders D."/>
            <person name="Harris D."/>
            <person name="Parkhill J."/>
            <person name="Hancock R.E.W."/>
            <person name="Brinkman F.S.L."/>
            <person name="Levesque R.C."/>
        </authorList>
    </citation>
    <scope>NUCLEOTIDE SEQUENCE [LARGE SCALE GENOMIC DNA]</scope>
    <source>
        <strain>LESB58</strain>
    </source>
</reference>
<evidence type="ECO:0000255" key="1">
    <source>
        <dbReference type="HAMAP-Rule" id="MF_00460"/>
    </source>
</evidence>
<protein>
    <recommendedName>
        <fullName evidence="1">Protein RnfH</fullName>
    </recommendedName>
</protein>
<accession>B7V1H8</accession>
<dbReference type="EMBL" id="FM209186">
    <property type="protein sequence ID" value="CAW29905.1"/>
    <property type="molecule type" value="Genomic_DNA"/>
</dbReference>
<dbReference type="RefSeq" id="WP_003095218.1">
    <property type="nucleotide sequence ID" value="NC_011770.1"/>
</dbReference>
<dbReference type="SMR" id="B7V1H8"/>
<dbReference type="KEGG" id="pag:PLES_51511"/>
<dbReference type="HOGENOM" id="CLU_150721_1_0_6"/>
<dbReference type="Gene3D" id="3.10.20.280">
    <property type="entry name" value="RnfH-like"/>
    <property type="match status" value="1"/>
</dbReference>
<dbReference type="HAMAP" id="MF_00460">
    <property type="entry name" value="UPF0125_RnfH"/>
    <property type="match status" value="1"/>
</dbReference>
<dbReference type="InterPro" id="IPR016155">
    <property type="entry name" value="Mopterin_synth/thiamin_S_b"/>
</dbReference>
<dbReference type="InterPro" id="IPR005346">
    <property type="entry name" value="RnfH"/>
</dbReference>
<dbReference type="InterPro" id="IPR037021">
    <property type="entry name" value="RnfH_sf"/>
</dbReference>
<dbReference type="NCBIfam" id="NF002490">
    <property type="entry name" value="PRK01777.1"/>
    <property type="match status" value="1"/>
</dbReference>
<dbReference type="PANTHER" id="PTHR37483">
    <property type="entry name" value="UPF0125 PROTEIN RATB"/>
    <property type="match status" value="1"/>
</dbReference>
<dbReference type="PANTHER" id="PTHR37483:SF1">
    <property type="entry name" value="UPF0125 PROTEIN RATB"/>
    <property type="match status" value="1"/>
</dbReference>
<dbReference type="Pfam" id="PF03658">
    <property type="entry name" value="Ub-RnfH"/>
    <property type="match status" value="1"/>
</dbReference>
<dbReference type="SUPFAM" id="SSF54285">
    <property type="entry name" value="MoaD/ThiS"/>
    <property type="match status" value="1"/>
</dbReference>
<organism>
    <name type="scientific">Pseudomonas aeruginosa (strain LESB58)</name>
    <dbReference type="NCBI Taxonomy" id="557722"/>
    <lineage>
        <taxon>Bacteria</taxon>
        <taxon>Pseudomonadati</taxon>
        <taxon>Pseudomonadota</taxon>
        <taxon>Gammaproteobacteria</taxon>
        <taxon>Pseudomonadales</taxon>
        <taxon>Pseudomonadaceae</taxon>
        <taxon>Pseudomonas</taxon>
    </lineage>
</organism>
<comment type="similarity">
    <text evidence="1">Belongs to the UPF0125 (RnfH) family.</text>
</comment>